<reference key="1">
    <citation type="journal article" date="2006" name="PLoS Genet.">
        <title>The complete genome sequence and comparative genome analysis of the high pathogenicity Yersinia enterocolitica strain 8081.</title>
        <authorList>
            <person name="Thomson N.R."/>
            <person name="Howard S."/>
            <person name="Wren B.W."/>
            <person name="Holden M.T.G."/>
            <person name="Crossman L."/>
            <person name="Challis G.L."/>
            <person name="Churcher C."/>
            <person name="Mungall K."/>
            <person name="Brooks K."/>
            <person name="Chillingworth T."/>
            <person name="Feltwell T."/>
            <person name="Abdellah Z."/>
            <person name="Hauser H."/>
            <person name="Jagels K."/>
            <person name="Maddison M."/>
            <person name="Moule S."/>
            <person name="Sanders M."/>
            <person name="Whitehead S."/>
            <person name="Quail M.A."/>
            <person name="Dougan G."/>
            <person name="Parkhill J."/>
            <person name="Prentice M.B."/>
        </authorList>
    </citation>
    <scope>NUCLEOTIDE SEQUENCE [LARGE SCALE GENOMIC DNA]</scope>
    <source>
        <strain>NCTC 13174 / 8081</strain>
    </source>
</reference>
<feature type="chain" id="PRO_0000292834" description="sn-glycerol-3-phosphate transport system permease protein UgpA">
    <location>
        <begin position="1"/>
        <end position="295"/>
    </location>
</feature>
<feature type="topological domain" description="Cytoplasmic" evidence="2">
    <location>
        <begin position="1"/>
        <end position="11"/>
    </location>
</feature>
<feature type="transmembrane region" description="Helical" evidence="3">
    <location>
        <begin position="12"/>
        <end position="32"/>
    </location>
</feature>
<feature type="topological domain" description="Periplasmic" evidence="2">
    <location>
        <begin position="33"/>
        <end position="80"/>
    </location>
</feature>
<feature type="transmembrane region" description="Helical" evidence="3">
    <location>
        <begin position="81"/>
        <end position="101"/>
    </location>
</feature>
<feature type="topological domain" description="Cytoplasmic" evidence="2">
    <location>
        <begin position="102"/>
        <end position="109"/>
    </location>
</feature>
<feature type="transmembrane region" description="Helical" evidence="3">
    <location>
        <begin position="110"/>
        <end position="130"/>
    </location>
</feature>
<feature type="topological domain" description="Periplasmic" evidence="2">
    <location>
        <begin position="131"/>
        <end position="157"/>
    </location>
</feature>
<feature type="transmembrane region" description="Helical" evidence="3">
    <location>
        <begin position="158"/>
        <end position="178"/>
    </location>
</feature>
<feature type="topological domain" description="Cytoplasmic" evidence="2">
    <location>
        <begin position="179"/>
        <end position="207"/>
    </location>
</feature>
<feature type="transmembrane region" description="Helical" evidence="3">
    <location>
        <begin position="208"/>
        <end position="228"/>
    </location>
</feature>
<feature type="topological domain" description="Periplasmic" evidence="2">
    <location>
        <begin position="229"/>
        <end position="262"/>
    </location>
</feature>
<feature type="transmembrane region" description="Helical" evidence="3">
    <location>
        <begin position="263"/>
        <end position="283"/>
    </location>
</feature>
<feature type="topological domain" description="Cytoplasmic" evidence="2">
    <location>
        <begin position="284"/>
        <end position="295"/>
    </location>
</feature>
<feature type="domain" description="ABC transmembrane type-1" evidence="3">
    <location>
        <begin position="72"/>
        <end position="284"/>
    </location>
</feature>
<dbReference type="EMBL" id="AM286415">
    <property type="protein sequence ID" value="CAL10376.1"/>
    <property type="molecule type" value="Genomic_DNA"/>
</dbReference>
<dbReference type="RefSeq" id="WP_004703935.1">
    <property type="nucleotide sequence ID" value="NC_008800.1"/>
</dbReference>
<dbReference type="RefSeq" id="YP_001004628.1">
    <property type="nucleotide sequence ID" value="NC_008800.1"/>
</dbReference>
<dbReference type="SMR" id="A1JID8"/>
<dbReference type="GeneID" id="93969090"/>
<dbReference type="KEGG" id="yen:YE0242"/>
<dbReference type="PATRIC" id="fig|393305.7.peg.334"/>
<dbReference type="eggNOG" id="COG1175">
    <property type="taxonomic scope" value="Bacteria"/>
</dbReference>
<dbReference type="HOGENOM" id="CLU_016047_0_2_6"/>
<dbReference type="OrthoDB" id="9785347at2"/>
<dbReference type="Proteomes" id="UP000000642">
    <property type="component" value="Chromosome"/>
</dbReference>
<dbReference type="GO" id="GO:0005886">
    <property type="term" value="C:plasma membrane"/>
    <property type="evidence" value="ECO:0007669"/>
    <property type="project" value="UniProtKB-SubCell"/>
</dbReference>
<dbReference type="GO" id="GO:0055085">
    <property type="term" value="P:transmembrane transport"/>
    <property type="evidence" value="ECO:0007669"/>
    <property type="project" value="InterPro"/>
</dbReference>
<dbReference type="CDD" id="cd06261">
    <property type="entry name" value="TM_PBP2"/>
    <property type="match status" value="1"/>
</dbReference>
<dbReference type="FunFam" id="1.10.3720.10:FF:000028">
    <property type="entry name" value="sn-glycerol-3-phosphate ABC transporter permease UgpA"/>
    <property type="match status" value="1"/>
</dbReference>
<dbReference type="Gene3D" id="1.10.3720.10">
    <property type="entry name" value="MetI-like"/>
    <property type="match status" value="1"/>
</dbReference>
<dbReference type="InterPro" id="IPR000515">
    <property type="entry name" value="MetI-like"/>
</dbReference>
<dbReference type="InterPro" id="IPR035906">
    <property type="entry name" value="MetI-like_sf"/>
</dbReference>
<dbReference type="InterPro" id="IPR050809">
    <property type="entry name" value="UgpAE/MalFG_permease"/>
</dbReference>
<dbReference type="NCBIfam" id="NF007852">
    <property type="entry name" value="PRK10561.1"/>
    <property type="match status" value="1"/>
</dbReference>
<dbReference type="PANTHER" id="PTHR43227">
    <property type="entry name" value="BLL4140 PROTEIN"/>
    <property type="match status" value="1"/>
</dbReference>
<dbReference type="PANTHER" id="PTHR43227:SF9">
    <property type="entry name" value="SN-GLYCEROL-3-PHOSPHATE TRANSPORT SYSTEM PERMEASE PROTEIN UGPA"/>
    <property type="match status" value="1"/>
</dbReference>
<dbReference type="Pfam" id="PF00528">
    <property type="entry name" value="BPD_transp_1"/>
    <property type="match status" value="1"/>
</dbReference>
<dbReference type="SUPFAM" id="SSF161098">
    <property type="entry name" value="MetI-like"/>
    <property type="match status" value="1"/>
</dbReference>
<dbReference type="PROSITE" id="PS50928">
    <property type="entry name" value="ABC_TM1"/>
    <property type="match status" value="1"/>
</dbReference>
<gene>
    <name type="primary">ugpA</name>
    <name type="ordered locus">YE0242</name>
</gene>
<keyword id="KW-0997">Cell inner membrane</keyword>
<keyword id="KW-1003">Cell membrane</keyword>
<keyword id="KW-0472">Membrane</keyword>
<keyword id="KW-0812">Transmembrane</keyword>
<keyword id="KW-1133">Transmembrane helix</keyword>
<keyword id="KW-0813">Transport</keyword>
<organism>
    <name type="scientific">Yersinia enterocolitica serotype O:8 / biotype 1B (strain NCTC 13174 / 8081)</name>
    <dbReference type="NCBI Taxonomy" id="393305"/>
    <lineage>
        <taxon>Bacteria</taxon>
        <taxon>Pseudomonadati</taxon>
        <taxon>Pseudomonadota</taxon>
        <taxon>Gammaproteobacteria</taxon>
        <taxon>Enterobacterales</taxon>
        <taxon>Yersiniaceae</taxon>
        <taxon>Yersinia</taxon>
    </lineage>
</organism>
<evidence type="ECO:0000250" key="1">
    <source>
        <dbReference type="UniProtKB" id="P10905"/>
    </source>
</evidence>
<evidence type="ECO:0000255" key="2"/>
<evidence type="ECO:0000255" key="3">
    <source>
        <dbReference type="PROSITE-ProRule" id="PRU00441"/>
    </source>
</evidence>
<evidence type="ECO:0000305" key="4"/>
<name>UGPA_YERE8</name>
<proteinExistence type="inferred from homology"/>
<comment type="function">
    <text evidence="1">Part of the ABC transporter complex UgpBAEC involved in sn-glycerol-3-phosphate (G3P) import. Probably responsible for the translocation of the substrate across the membrane.</text>
</comment>
<comment type="subunit">
    <text evidence="1">The complex is composed of two ATP-binding proteins (UgpC), two transmembrane proteins (UgpA and UgpE) and a solute-binding protein (UgpB).</text>
</comment>
<comment type="subcellular location">
    <subcellularLocation>
        <location evidence="1">Cell inner membrane</location>
        <topology evidence="2">Multi-pass membrane protein</topology>
    </subcellularLocation>
</comment>
<comment type="similarity">
    <text evidence="4">Belongs to the binding-protein-dependent transport system permease family. UgpAE subfamily.</text>
</comment>
<accession>A1JID8</accession>
<sequence length="295" mass="32589">MSSSRPGFSCSWLPYLLVLPQLAITAVFFLWPAGEALWYSVQMLDPFGLSSEFVGLSNFIALFHDEYYLASFYTTLIFSSLVAGIGLVVSLFLAAMVDYVLRGSRIYQTLMILPYAVAPAVAAVLWIFLFNPGLGLITHFLASLGYNWNHAQNSGQAMFLVVLASVWKQISYNFLFFLAALQSIPRSLVEAAAIDGAGPVRRFFNLVLPLISPVSFFLLVVNLVYAFFDTFPVIDAATGGGPMQATTTLIYKIYREGFAGLDLSSSAAQSVVLMLLVIGLTVIQFRFVERKVRYQ</sequence>
<protein>
    <recommendedName>
        <fullName evidence="1">sn-glycerol-3-phosphate transport system permease protein UgpA</fullName>
    </recommendedName>
</protein>